<sequence>MKIGIIGAMEEEVTLLRDKIDNRQTITLGGCEIYTGQLNGTEVALLKSGIGKVAAALGATLLLEHCKPDVIINTGSAGGLASTLKVGDIVVSDEARYHDADVTAFGYEYGQLPGCPAGFKADDKLIAAAESCIRELNLNAVRGLIVSGDAFINGSVGLAKIRHNFPDAVAVEMEATAIAHVCYNFNVPFVVVRAISDVADQQSHLSFDEFLAVAAKQSTLMVETLVQKLAHG</sequence>
<feature type="chain" id="PRO_0000359337" description="5'-methylthioadenosine/S-adenosylhomocysteine nucleosidase">
    <location>
        <begin position="1"/>
        <end position="232"/>
    </location>
</feature>
<feature type="active site" description="Proton acceptor" evidence="1">
    <location>
        <position position="12"/>
    </location>
</feature>
<feature type="active site" description="Proton donor" evidence="1">
    <location>
        <position position="197"/>
    </location>
</feature>
<feature type="binding site" evidence="1">
    <location>
        <position position="78"/>
    </location>
    <ligand>
        <name>substrate</name>
    </ligand>
</feature>
<feature type="binding site" evidence="1">
    <location>
        <position position="152"/>
    </location>
    <ligand>
        <name>substrate</name>
    </ligand>
</feature>
<feature type="binding site" evidence="1">
    <location>
        <begin position="173"/>
        <end position="174"/>
    </location>
    <ligand>
        <name>substrate</name>
    </ligand>
</feature>
<protein>
    <recommendedName>
        <fullName evidence="1">5'-methylthioadenosine/S-adenosylhomocysteine nucleosidase</fullName>
        <shortName evidence="1">MTA/SAH nucleosidase</shortName>
        <shortName evidence="1">MTAN</shortName>
        <ecNumber evidence="1">3.2.2.9</ecNumber>
    </recommendedName>
    <alternativeName>
        <fullName evidence="1">5'-deoxyadenosine nucleosidase</fullName>
        <shortName evidence="1">DOA nucleosidase</shortName>
        <shortName evidence="1">dAdo nucleosidase</shortName>
    </alternativeName>
    <alternativeName>
        <fullName evidence="1">5'-methylthioadenosine nucleosidase</fullName>
        <shortName evidence="1">MTA nucleosidase</shortName>
    </alternativeName>
    <alternativeName>
        <fullName evidence="1">S-adenosylhomocysteine nucleosidase</fullName>
        <shortName evidence="1">AdoHcy nucleosidase</shortName>
        <shortName evidence="1">SAH nucleosidase</shortName>
        <shortName evidence="1">SRH nucleosidase</shortName>
    </alternativeName>
</protein>
<evidence type="ECO:0000255" key="1">
    <source>
        <dbReference type="HAMAP-Rule" id="MF_01684"/>
    </source>
</evidence>
<keyword id="KW-0028">Amino-acid biosynthesis</keyword>
<keyword id="KW-0378">Hydrolase</keyword>
<keyword id="KW-0486">Methionine biosynthesis</keyword>
<proteinExistence type="inferred from homology"/>
<name>MTNN_SALSV</name>
<organism>
    <name type="scientific">Salmonella schwarzengrund (strain CVM19633)</name>
    <dbReference type="NCBI Taxonomy" id="439843"/>
    <lineage>
        <taxon>Bacteria</taxon>
        <taxon>Pseudomonadati</taxon>
        <taxon>Pseudomonadota</taxon>
        <taxon>Gammaproteobacteria</taxon>
        <taxon>Enterobacterales</taxon>
        <taxon>Enterobacteriaceae</taxon>
        <taxon>Salmonella</taxon>
    </lineage>
</organism>
<reference key="1">
    <citation type="journal article" date="2011" name="J. Bacteriol.">
        <title>Comparative genomics of 28 Salmonella enterica isolates: evidence for CRISPR-mediated adaptive sublineage evolution.</title>
        <authorList>
            <person name="Fricke W.F."/>
            <person name="Mammel M.K."/>
            <person name="McDermott P.F."/>
            <person name="Tartera C."/>
            <person name="White D.G."/>
            <person name="Leclerc J.E."/>
            <person name="Ravel J."/>
            <person name="Cebula T.A."/>
        </authorList>
    </citation>
    <scope>NUCLEOTIDE SEQUENCE [LARGE SCALE GENOMIC DNA]</scope>
    <source>
        <strain>CVM19633</strain>
    </source>
</reference>
<accession>B4TXR1</accession>
<dbReference type="EC" id="3.2.2.9" evidence="1"/>
<dbReference type="EMBL" id="CP001127">
    <property type="protein sequence ID" value="ACF91345.1"/>
    <property type="molecule type" value="Genomic_DNA"/>
</dbReference>
<dbReference type="RefSeq" id="WP_000689822.1">
    <property type="nucleotide sequence ID" value="NC_011094.1"/>
</dbReference>
<dbReference type="SMR" id="B4TXR1"/>
<dbReference type="KEGG" id="sew:SeSA_A0230"/>
<dbReference type="HOGENOM" id="CLU_031248_2_2_6"/>
<dbReference type="UniPathway" id="UPA00904">
    <property type="reaction ID" value="UER00871"/>
</dbReference>
<dbReference type="Proteomes" id="UP000001865">
    <property type="component" value="Chromosome"/>
</dbReference>
<dbReference type="GO" id="GO:0005829">
    <property type="term" value="C:cytosol"/>
    <property type="evidence" value="ECO:0007669"/>
    <property type="project" value="TreeGrafter"/>
</dbReference>
<dbReference type="GO" id="GO:0008782">
    <property type="term" value="F:adenosylhomocysteine nucleosidase activity"/>
    <property type="evidence" value="ECO:0007669"/>
    <property type="project" value="UniProtKB-UniRule"/>
</dbReference>
<dbReference type="GO" id="GO:0008930">
    <property type="term" value="F:methylthioadenosine nucleosidase activity"/>
    <property type="evidence" value="ECO:0007669"/>
    <property type="project" value="UniProtKB-UniRule"/>
</dbReference>
<dbReference type="GO" id="GO:0019509">
    <property type="term" value="P:L-methionine salvage from methylthioadenosine"/>
    <property type="evidence" value="ECO:0007669"/>
    <property type="project" value="UniProtKB-UniRule"/>
</dbReference>
<dbReference type="GO" id="GO:0019284">
    <property type="term" value="P:L-methionine salvage from S-adenosylmethionine"/>
    <property type="evidence" value="ECO:0007669"/>
    <property type="project" value="TreeGrafter"/>
</dbReference>
<dbReference type="GO" id="GO:0046124">
    <property type="term" value="P:purine deoxyribonucleoside catabolic process"/>
    <property type="evidence" value="ECO:0007669"/>
    <property type="project" value="UniProtKB-UniRule"/>
</dbReference>
<dbReference type="CDD" id="cd09008">
    <property type="entry name" value="MTAN"/>
    <property type="match status" value="1"/>
</dbReference>
<dbReference type="FunFam" id="3.40.50.1580:FF:000001">
    <property type="entry name" value="MTA/SAH nucleosidase family protein"/>
    <property type="match status" value="1"/>
</dbReference>
<dbReference type="Gene3D" id="3.40.50.1580">
    <property type="entry name" value="Nucleoside phosphorylase domain"/>
    <property type="match status" value="1"/>
</dbReference>
<dbReference type="HAMAP" id="MF_01684">
    <property type="entry name" value="Salvage_MtnN"/>
    <property type="match status" value="1"/>
</dbReference>
<dbReference type="InterPro" id="IPR010049">
    <property type="entry name" value="MTA_SAH_Nsdase"/>
</dbReference>
<dbReference type="InterPro" id="IPR000845">
    <property type="entry name" value="Nucleoside_phosphorylase_d"/>
</dbReference>
<dbReference type="InterPro" id="IPR035994">
    <property type="entry name" value="Nucleoside_phosphorylase_sf"/>
</dbReference>
<dbReference type="NCBIfam" id="TIGR01704">
    <property type="entry name" value="MTA_SAH-Nsdase"/>
    <property type="match status" value="1"/>
</dbReference>
<dbReference type="NCBIfam" id="NF004079">
    <property type="entry name" value="PRK05584.1"/>
    <property type="match status" value="1"/>
</dbReference>
<dbReference type="PANTHER" id="PTHR46832">
    <property type="entry name" value="5'-METHYLTHIOADENOSINE/S-ADENOSYLHOMOCYSTEINE NUCLEOSIDASE"/>
    <property type="match status" value="1"/>
</dbReference>
<dbReference type="PANTHER" id="PTHR46832:SF1">
    <property type="entry name" value="5'-METHYLTHIOADENOSINE_S-ADENOSYLHOMOCYSTEINE NUCLEOSIDASE"/>
    <property type="match status" value="1"/>
</dbReference>
<dbReference type="Pfam" id="PF01048">
    <property type="entry name" value="PNP_UDP_1"/>
    <property type="match status" value="1"/>
</dbReference>
<dbReference type="SUPFAM" id="SSF53167">
    <property type="entry name" value="Purine and uridine phosphorylases"/>
    <property type="match status" value="1"/>
</dbReference>
<gene>
    <name evidence="1" type="primary">mtnN</name>
    <name type="ordered locus">SeSA_A0230</name>
</gene>
<comment type="function">
    <text evidence="1">Catalyzes the irreversible cleavage of the glycosidic bond in both 5'-methylthioadenosine (MTA) and S-adenosylhomocysteine (SAH/AdoHcy) to adenine and the corresponding thioribose, 5'-methylthioribose and S-ribosylhomocysteine, respectively. Also cleaves 5'-deoxyadenosine, a toxic by-product of radical S-adenosylmethionine (SAM) enzymes, into 5-deoxyribose and adenine. Thus, is required for in vivo function of the radical SAM enzymes biotin synthase and lipoic acid synthase, that are inhibited by 5'-deoxyadenosine accumulation.</text>
</comment>
<comment type="catalytic activity">
    <reaction evidence="1">
        <text>S-adenosyl-L-homocysteine + H2O = S-(5-deoxy-D-ribos-5-yl)-L-homocysteine + adenine</text>
        <dbReference type="Rhea" id="RHEA:17805"/>
        <dbReference type="ChEBI" id="CHEBI:15377"/>
        <dbReference type="ChEBI" id="CHEBI:16708"/>
        <dbReference type="ChEBI" id="CHEBI:57856"/>
        <dbReference type="ChEBI" id="CHEBI:58195"/>
        <dbReference type="EC" id="3.2.2.9"/>
    </reaction>
</comment>
<comment type="catalytic activity">
    <reaction evidence="1">
        <text>S-methyl-5'-thioadenosine + H2O = 5-(methylsulfanyl)-D-ribose + adenine</text>
        <dbReference type="Rhea" id="RHEA:13617"/>
        <dbReference type="ChEBI" id="CHEBI:15377"/>
        <dbReference type="ChEBI" id="CHEBI:16708"/>
        <dbReference type="ChEBI" id="CHEBI:17509"/>
        <dbReference type="ChEBI" id="CHEBI:78440"/>
        <dbReference type="EC" id="3.2.2.9"/>
    </reaction>
</comment>
<comment type="catalytic activity">
    <reaction evidence="1">
        <text>5'-deoxyadenosine + H2O = 5-deoxy-D-ribose + adenine</text>
        <dbReference type="Rhea" id="RHEA:29859"/>
        <dbReference type="ChEBI" id="CHEBI:15377"/>
        <dbReference type="ChEBI" id="CHEBI:16708"/>
        <dbReference type="ChEBI" id="CHEBI:17319"/>
        <dbReference type="ChEBI" id="CHEBI:149540"/>
        <dbReference type="EC" id="3.2.2.9"/>
    </reaction>
    <physiologicalReaction direction="left-to-right" evidence="1">
        <dbReference type="Rhea" id="RHEA:29860"/>
    </physiologicalReaction>
</comment>
<comment type="pathway">
    <text evidence="1">Amino-acid biosynthesis; L-methionine biosynthesis via salvage pathway; S-methyl-5-thio-alpha-D-ribose 1-phosphate from S-methyl-5'-thioadenosine (hydrolase route): step 1/2.</text>
</comment>
<comment type="subunit">
    <text evidence="1">Homodimer.</text>
</comment>
<comment type="similarity">
    <text evidence="1">Belongs to the PNP/UDP phosphorylase family. MtnN subfamily.</text>
</comment>